<sequence length="183" mass="19905">MVVGIEGIITKKEPTFIIVKCASGLSYGIFISLFCSAKIQTQEKHEFFITQIIKEDSNKFYGFLDKDEQKMFEMLLKVNGVGANTAMAVCSSLDVNSFYKALSLGDESVLKKVPGIGPKSAKRIIVELSDTKTKLENVSDDKSEALAALLTLGFKQEKIISVLASAQATGTSELIKEALKKLG</sequence>
<protein>
    <recommendedName>
        <fullName evidence="1">Holliday junction branch migration complex subunit RuvA</fullName>
    </recommendedName>
</protein>
<accession>A1VZE7</accession>
<reference key="1">
    <citation type="submission" date="2006-12" db="EMBL/GenBank/DDBJ databases">
        <authorList>
            <person name="Fouts D.E."/>
            <person name="Nelson K.E."/>
            <person name="Sebastian Y."/>
        </authorList>
    </citation>
    <scope>NUCLEOTIDE SEQUENCE [LARGE SCALE GENOMIC DNA]</scope>
    <source>
        <strain>81-176</strain>
    </source>
</reference>
<feature type="chain" id="PRO_1000002425" description="Holliday junction branch migration complex subunit RuvA">
    <location>
        <begin position="1"/>
        <end position="183"/>
    </location>
</feature>
<feature type="region of interest" description="Domain I" evidence="1">
    <location>
        <begin position="1"/>
        <end position="64"/>
    </location>
</feature>
<feature type="region of interest" description="Domain II" evidence="1">
    <location>
        <begin position="65"/>
        <end position="139"/>
    </location>
</feature>
<feature type="region of interest" description="Domain III" evidence="1">
    <location>
        <begin position="139"/>
        <end position="183"/>
    </location>
</feature>
<feature type="region of interest" description="Flexible linker" evidence="1">
    <location>
        <position position="139"/>
    </location>
</feature>
<organism>
    <name type="scientific">Campylobacter jejuni subsp. jejuni serotype O:23/36 (strain 81-176)</name>
    <dbReference type="NCBI Taxonomy" id="354242"/>
    <lineage>
        <taxon>Bacteria</taxon>
        <taxon>Pseudomonadati</taxon>
        <taxon>Campylobacterota</taxon>
        <taxon>Epsilonproteobacteria</taxon>
        <taxon>Campylobacterales</taxon>
        <taxon>Campylobacteraceae</taxon>
        <taxon>Campylobacter</taxon>
    </lineage>
</organism>
<gene>
    <name evidence="1" type="primary">ruvA</name>
    <name type="ordered locus">CJJ81176_0820</name>
</gene>
<proteinExistence type="inferred from homology"/>
<dbReference type="EMBL" id="CP000538">
    <property type="protein sequence ID" value="EAQ72443.1"/>
    <property type="molecule type" value="Genomic_DNA"/>
</dbReference>
<dbReference type="RefSeq" id="WP_002856927.1">
    <property type="nucleotide sequence ID" value="NC_008787.1"/>
</dbReference>
<dbReference type="SMR" id="A1VZE7"/>
<dbReference type="KEGG" id="cjj:CJJ81176_0820"/>
<dbReference type="eggNOG" id="COG0632">
    <property type="taxonomic scope" value="Bacteria"/>
</dbReference>
<dbReference type="HOGENOM" id="CLU_087936_3_1_7"/>
<dbReference type="Proteomes" id="UP000000646">
    <property type="component" value="Chromosome"/>
</dbReference>
<dbReference type="GO" id="GO:0005737">
    <property type="term" value="C:cytoplasm"/>
    <property type="evidence" value="ECO:0007669"/>
    <property type="project" value="UniProtKB-SubCell"/>
</dbReference>
<dbReference type="GO" id="GO:0009379">
    <property type="term" value="C:Holliday junction helicase complex"/>
    <property type="evidence" value="ECO:0007669"/>
    <property type="project" value="InterPro"/>
</dbReference>
<dbReference type="GO" id="GO:0048476">
    <property type="term" value="C:Holliday junction resolvase complex"/>
    <property type="evidence" value="ECO:0007669"/>
    <property type="project" value="UniProtKB-UniRule"/>
</dbReference>
<dbReference type="GO" id="GO:0005524">
    <property type="term" value="F:ATP binding"/>
    <property type="evidence" value="ECO:0007669"/>
    <property type="project" value="InterPro"/>
</dbReference>
<dbReference type="GO" id="GO:0000400">
    <property type="term" value="F:four-way junction DNA binding"/>
    <property type="evidence" value="ECO:0007669"/>
    <property type="project" value="UniProtKB-UniRule"/>
</dbReference>
<dbReference type="GO" id="GO:0009378">
    <property type="term" value="F:four-way junction helicase activity"/>
    <property type="evidence" value="ECO:0007669"/>
    <property type="project" value="InterPro"/>
</dbReference>
<dbReference type="GO" id="GO:0006310">
    <property type="term" value="P:DNA recombination"/>
    <property type="evidence" value="ECO:0007669"/>
    <property type="project" value="UniProtKB-UniRule"/>
</dbReference>
<dbReference type="GO" id="GO:0006281">
    <property type="term" value="P:DNA repair"/>
    <property type="evidence" value="ECO:0007669"/>
    <property type="project" value="UniProtKB-UniRule"/>
</dbReference>
<dbReference type="CDD" id="cd14332">
    <property type="entry name" value="UBA_RuvA_C"/>
    <property type="match status" value="1"/>
</dbReference>
<dbReference type="Gene3D" id="1.10.150.20">
    <property type="entry name" value="5' to 3' exonuclease, C-terminal subdomain"/>
    <property type="match status" value="1"/>
</dbReference>
<dbReference type="Gene3D" id="1.10.8.10">
    <property type="entry name" value="DNA helicase RuvA subunit, C-terminal domain"/>
    <property type="match status" value="1"/>
</dbReference>
<dbReference type="Gene3D" id="2.40.50.140">
    <property type="entry name" value="Nucleic acid-binding proteins"/>
    <property type="match status" value="1"/>
</dbReference>
<dbReference type="HAMAP" id="MF_00031">
    <property type="entry name" value="DNA_HJ_migration_RuvA"/>
    <property type="match status" value="1"/>
</dbReference>
<dbReference type="InterPro" id="IPR013849">
    <property type="entry name" value="DNA_helicase_Holl-junc_RuvA_I"/>
</dbReference>
<dbReference type="InterPro" id="IPR003583">
    <property type="entry name" value="Hlx-hairpin-Hlx_DNA-bd_motif"/>
</dbReference>
<dbReference type="InterPro" id="IPR012340">
    <property type="entry name" value="NA-bd_OB-fold"/>
</dbReference>
<dbReference type="InterPro" id="IPR000085">
    <property type="entry name" value="RuvA"/>
</dbReference>
<dbReference type="InterPro" id="IPR010994">
    <property type="entry name" value="RuvA_2-like"/>
</dbReference>
<dbReference type="InterPro" id="IPR011114">
    <property type="entry name" value="RuvA_C"/>
</dbReference>
<dbReference type="InterPro" id="IPR036267">
    <property type="entry name" value="RuvA_C_sf"/>
</dbReference>
<dbReference type="NCBIfam" id="TIGR00084">
    <property type="entry name" value="ruvA"/>
    <property type="match status" value="1"/>
</dbReference>
<dbReference type="Pfam" id="PF14520">
    <property type="entry name" value="HHH_5"/>
    <property type="match status" value="1"/>
</dbReference>
<dbReference type="Pfam" id="PF07499">
    <property type="entry name" value="RuvA_C"/>
    <property type="match status" value="1"/>
</dbReference>
<dbReference type="Pfam" id="PF01330">
    <property type="entry name" value="RuvA_N"/>
    <property type="match status" value="1"/>
</dbReference>
<dbReference type="SMART" id="SM00278">
    <property type="entry name" value="HhH1"/>
    <property type="match status" value="2"/>
</dbReference>
<dbReference type="SUPFAM" id="SSF46929">
    <property type="entry name" value="DNA helicase RuvA subunit, C-terminal domain"/>
    <property type="match status" value="1"/>
</dbReference>
<dbReference type="SUPFAM" id="SSF50249">
    <property type="entry name" value="Nucleic acid-binding proteins"/>
    <property type="match status" value="1"/>
</dbReference>
<dbReference type="SUPFAM" id="SSF47781">
    <property type="entry name" value="RuvA domain 2-like"/>
    <property type="match status" value="1"/>
</dbReference>
<name>RUVA_CAMJJ</name>
<comment type="function">
    <text evidence="1">The RuvA-RuvB-RuvC complex processes Holliday junction (HJ) DNA during genetic recombination and DNA repair, while the RuvA-RuvB complex plays an important role in the rescue of blocked DNA replication forks via replication fork reversal (RFR). RuvA specifically binds to HJ cruciform DNA, conferring on it an open structure. The RuvB hexamer acts as an ATP-dependent pump, pulling dsDNA into and through the RuvAB complex. HJ branch migration allows RuvC to scan DNA until it finds its consensus sequence, where it cleaves and resolves the cruciform DNA.</text>
</comment>
<comment type="subunit">
    <text evidence="1">Homotetramer. Forms an RuvA(8)-RuvB(12)-Holliday junction (HJ) complex. HJ DNA is sandwiched between 2 RuvA tetramers; dsDNA enters through RuvA and exits via RuvB. An RuvB hexamer assembles on each DNA strand where it exits the tetramer. Each RuvB hexamer is contacted by two RuvA subunits (via domain III) on 2 adjacent RuvB subunits; this complex drives branch migration. In the full resolvosome a probable DNA-RuvA(4)-RuvB(12)-RuvC(2) complex forms which resolves the HJ.</text>
</comment>
<comment type="subcellular location">
    <subcellularLocation>
        <location evidence="1">Cytoplasm</location>
    </subcellularLocation>
</comment>
<comment type="domain">
    <text evidence="1">Has three domains with a flexible linker between the domains II and III and assumes an 'L' shape. Domain III is highly mobile and contacts RuvB.</text>
</comment>
<comment type="similarity">
    <text evidence="1">Belongs to the RuvA family.</text>
</comment>
<keyword id="KW-0963">Cytoplasm</keyword>
<keyword id="KW-0227">DNA damage</keyword>
<keyword id="KW-0233">DNA recombination</keyword>
<keyword id="KW-0234">DNA repair</keyword>
<keyword id="KW-0238">DNA-binding</keyword>
<evidence type="ECO:0000255" key="1">
    <source>
        <dbReference type="HAMAP-Rule" id="MF_00031"/>
    </source>
</evidence>